<organism>
    <name type="scientific">Sus scrofa</name>
    <name type="common">Pig</name>
    <dbReference type="NCBI Taxonomy" id="9823"/>
    <lineage>
        <taxon>Eukaryota</taxon>
        <taxon>Metazoa</taxon>
        <taxon>Chordata</taxon>
        <taxon>Craniata</taxon>
        <taxon>Vertebrata</taxon>
        <taxon>Euteleostomi</taxon>
        <taxon>Mammalia</taxon>
        <taxon>Eutheria</taxon>
        <taxon>Laurasiatheria</taxon>
        <taxon>Artiodactyla</taxon>
        <taxon>Suina</taxon>
        <taxon>Suidae</taxon>
        <taxon>Sus</taxon>
    </lineage>
</organism>
<comment type="function">
    <text evidence="1 2 3">Secreted ribonuclease that can either promote or restrict cell proliferation of target cells, depending on the context (By similarity). Endocytosed in target cells via its receptor PLXNB2 and translocates to the cytoplasm or nucleus (By similarity). Under stress conditions, localizes to the cytoplasm and promotes the assembly of stress granules (SGs): specifically cleaves a subset of tRNAs within anticodon loops to produce tRNA-derived stress-induced fragments (tiRNAs), resulting in translation repression and inhibition of cell proliferation (By similarity). tiRNas also prevent formation of apoptosome, thereby promoting cell survival (By similarity). Preferentially cleaves RNAs between a pyrimidine and an adenosine residue, suggesting that it cleaves the anticodon loop of tRNA(Ala) (32-UUAGCAU-38) after positions 33 and 36 (By similarity). Cleaves a subset of tRNAs, including tRNA(Ala), tRNA(Glu), tRNA(Gly), tRNA(Lys), tRNA(Val), tRNA(His), tRNA(Asp) and tRNA(Sec) (By similarity). Under growth conditions and in differentiated cells, translocates to the nucleus and stimulates ribosomal RNA (rRNA) transcription, including that containing the initiation site sequences of 45S rRNA, thereby promoting cell growth and proliferation (By similarity). Angiogenin induces vascularization of normal and malignant tissues via its ability to promote rRNA transcription (PubMed:8448182). Involved in hematopoietic stem and progenitor cell (HSPC) growth and survival by promoting rRNA transcription in growth conditions and inhibiting translation in response to stress, respectively (By similarity). Mediates the crosstalk between myeloid and intestinal epithelial cells to protect the intestinal epithelial barrier integrity: secreted by myeloid cells and promotes intestinal epithelial cells proliferation and survival (By similarity). Also mediates osteoclast-endothelial cell crosstalk in growing bone: produced by osteoclasts and protects the neighboring vascular cells against senescence by promoting rRNA transcription (By similarity).</text>
</comment>
<comment type="activity regulation">
    <text evidence="1">Has weak tRNA ribonuclease activity by itself due to partial autoinhibition by its C-terminus, which folds into a short alpha-helix that partially occludes the substrate-binding site. In absence of stress, the ribonuclease activity is inhibited by RNH1 in the cytoplasm. In response to stress, dissociates from RNH1 in the cytoplasm and associates with cytoplasmic ribosomes with vacant A-sites: ribosomes directly activate the tRNA ribonuclease activity of ANG by refolding the C-terminal alpha-helix. In response to stress, the angiogenic activity of ANG is inhibited by RNH1 in the nucleus.</text>
</comment>
<comment type="subunit">
    <text evidence="1">Homodimer. Interacts with RNH1; inhibiting ANG ribonuclease activity. Interacts with PCNA.</text>
</comment>
<comment type="subcellular location">
    <subcellularLocation>
        <location evidence="1">Secreted</location>
    </subcellularLocation>
    <subcellularLocation>
        <location evidence="1">Nucleus</location>
    </subcellularLocation>
    <subcellularLocation>
        <location evidence="1">Nucleus</location>
        <location evidence="1">Nucleolus</location>
    </subcellularLocation>
    <subcellularLocation>
        <location evidence="1">Cytoplasm</location>
        <location evidence="1">Stress granule</location>
    </subcellularLocation>
    <text evidence="1">The secreted protein is rapidly endocytosed by target cells following interaction with PLXNB2 receptor and translocated to the cytoplasm and nucleus. In the nucleus, accumulates in the nucleolus and binds to DNA.</text>
</comment>
<comment type="similarity">
    <text evidence="4">Belongs to the pancreatic ribonuclease family.</text>
</comment>
<proteinExistence type="evidence at protein level"/>
<gene>
    <name type="primary">ANG</name>
</gene>
<accession>P31346</accession>
<accession>A0A287A0F3</accession>
<accession>Q1HDU1</accession>
<reference key="1">
    <citation type="journal article" date="2009" name="Mol. Biol. Rep.">
        <title>The porcine ANG, RNASE1 and RNASE6 genes: molecular cloning, polymorphism detection and the association with haematological parameters.</title>
        <authorList>
            <person name="Bai X."/>
            <person name="Liang Z."/>
            <person name="Zhao S."/>
            <person name="Liu X."/>
            <person name="Zhu M."/>
            <person name="Wu Z."/>
            <person name="Yu M."/>
        </authorList>
    </citation>
    <scope>NUCLEOTIDE SEQUENCE [MRNA]</scope>
</reference>
<reference key="2">
    <citation type="submission" date="2009-11" db="EMBL/GenBank/DDBJ databases">
        <authorList>
            <consortium name="Porcine genome sequencing project"/>
        </authorList>
    </citation>
    <scope>NUCLEOTIDE SEQUENCE [LARGE SCALE GENOMIC DNA]</scope>
</reference>
<reference key="3">
    <citation type="journal article" date="1993" name="Biochim. Biophys. Acta">
        <title>Characterization and sequencing of rabbit, pig and mouse angiogenins: discernment of functionally important residues and regions.</title>
        <authorList>
            <person name="Bond M.D."/>
            <person name="Strydom D.J."/>
            <person name="Vallee B.L."/>
        </authorList>
    </citation>
    <scope>PROTEIN SEQUENCE OF 25-147</scope>
    <scope>FUNCTION</scope>
    <source>
        <tissue>Serum</tissue>
    </source>
</reference>
<feature type="signal peptide" evidence="3">
    <location>
        <begin position="1"/>
        <end position="24"/>
    </location>
</feature>
<feature type="chain" id="PRO_0000057157" description="Angiogenin" evidence="3">
    <location>
        <begin position="25"/>
        <end position="147"/>
    </location>
</feature>
<feature type="short sequence motif" description="Nucleolar localization signal" evidence="1">
    <location>
        <begin position="55"/>
        <end position="59"/>
    </location>
</feature>
<feature type="active site" description="Proton acceptor" evidence="1">
    <location>
        <position position="37"/>
    </location>
</feature>
<feature type="active site" description="Proton donor" evidence="1">
    <location>
        <position position="137"/>
    </location>
</feature>
<feature type="binding site" evidence="1">
    <location>
        <position position="45"/>
    </location>
    <ligand>
        <name>tRNA</name>
        <dbReference type="ChEBI" id="CHEBI:17843"/>
    </ligand>
</feature>
<feature type="binding site" evidence="1">
    <location>
        <position position="46"/>
    </location>
    <ligand>
        <name>tRNA</name>
        <dbReference type="ChEBI" id="CHEBI:17843"/>
    </ligand>
</feature>
<feature type="binding site" evidence="1">
    <location>
        <position position="104"/>
    </location>
    <ligand>
        <name>tRNA</name>
        <dbReference type="ChEBI" id="CHEBI:17843"/>
    </ligand>
</feature>
<feature type="binding site" evidence="1">
    <location>
        <position position="126"/>
    </location>
    <ligand>
        <name>tRNA</name>
        <dbReference type="ChEBI" id="CHEBI:17843"/>
    </ligand>
</feature>
<feature type="disulfide bond" evidence="1">
    <location>
        <begin position="50"/>
        <end position="104"/>
    </location>
</feature>
<feature type="disulfide bond" evidence="1">
    <location>
        <begin position="63"/>
        <end position="115"/>
    </location>
</feature>
<feature type="disulfide bond" evidence="1">
    <location>
        <begin position="81"/>
        <end position="130"/>
    </location>
</feature>
<keyword id="KW-0037">Angiogenesis</keyword>
<keyword id="KW-0963">Cytoplasm</keyword>
<keyword id="KW-0217">Developmental protein</keyword>
<keyword id="KW-0221">Differentiation</keyword>
<keyword id="KW-0903">Direct protein sequencing</keyword>
<keyword id="KW-1015">Disulfide bond</keyword>
<keyword id="KW-0238">DNA-binding</keyword>
<keyword id="KW-0255">Endonuclease</keyword>
<keyword id="KW-0378">Hydrolase</keyword>
<keyword id="KW-0540">Nuclease</keyword>
<keyword id="KW-0539">Nucleus</keyword>
<keyword id="KW-0652">Protein synthesis inhibitor</keyword>
<keyword id="KW-1185">Reference proteome</keyword>
<keyword id="KW-0964">Secreted</keyword>
<keyword id="KW-0732">Signal</keyword>
<keyword id="KW-0346">Stress response</keyword>
<evidence type="ECO:0000250" key="1">
    <source>
        <dbReference type="UniProtKB" id="P03950"/>
    </source>
</evidence>
<evidence type="ECO:0000250" key="2">
    <source>
        <dbReference type="UniProtKB" id="P21570"/>
    </source>
</evidence>
<evidence type="ECO:0000269" key="3">
    <source>
    </source>
</evidence>
<evidence type="ECO:0000305" key="4"/>
<name>ANGI_PIG</name>
<dbReference type="EC" id="3.1.27.-" evidence="1"/>
<dbReference type="EMBL" id="DQ498979">
    <property type="protein sequence ID" value="ABF55381.1"/>
    <property type="molecule type" value="mRNA"/>
</dbReference>
<dbReference type="EMBL" id="DQ498980">
    <property type="protein sequence ID" value="ABF55382.1"/>
    <property type="molecule type" value="Genomic_DNA"/>
</dbReference>
<dbReference type="EMBL" id="EU814501">
    <property type="protein sequence ID" value="ACJ26822.1"/>
    <property type="molecule type" value="mRNA"/>
</dbReference>
<dbReference type="PIR" id="S29834">
    <property type="entry name" value="A43825"/>
</dbReference>
<dbReference type="RefSeq" id="NP_001038038.1">
    <property type="nucleotide sequence ID" value="NM_001044573.2"/>
</dbReference>
<dbReference type="RefSeq" id="XP_013846711.1">
    <property type="nucleotide sequence ID" value="XM_013991257.1"/>
</dbReference>
<dbReference type="SMR" id="P31346"/>
<dbReference type="FunCoup" id="P31346">
    <property type="interactions" value="192"/>
</dbReference>
<dbReference type="IntAct" id="P31346">
    <property type="interactions" value="2"/>
</dbReference>
<dbReference type="PaxDb" id="9823-ENSSSCP00000020122"/>
<dbReference type="PeptideAtlas" id="P31346"/>
<dbReference type="Ensembl" id="ENSSSCT00000065893.3">
    <property type="protein sequence ID" value="ENSSSCP00000037223.2"/>
    <property type="gene ID" value="ENSSSCG00000059608.1"/>
</dbReference>
<dbReference type="Ensembl" id="ENSSSCT00085052700">
    <property type="protein sequence ID" value="ENSSSCP00085036839"/>
    <property type="gene ID" value="ENSSSCG00085027545"/>
</dbReference>
<dbReference type="Ensembl" id="ENSSSCT00085052707">
    <property type="protein sequence ID" value="ENSSSCP00085036844"/>
    <property type="gene ID" value="ENSSSCG00085027545"/>
</dbReference>
<dbReference type="Ensembl" id="ENSSSCT00115022498">
    <property type="protein sequence ID" value="ENSSSCP00115021315"/>
    <property type="gene ID" value="ENSSSCG00115013041"/>
</dbReference>
<dbReference type="GeneID" id="733639"/>
<dbReference type="KEGG" id="ssc:733639"/>
<dbReference type="CTD" id="283"/>
<dbReference type="eggNOG" id="ENOG502S9Q1">
    <property type="taxonomic scope" value="Eukaryota"/>
</dbReference>
<dbReference type="GeneTree" id="ENSGT00940000162981"/>
<dbReference type="HOGENOM" id="CLU_117006_3_1_1"/>
<dbReference type="InParanoid" id="P31346"/>
<dbReference type="OrthoDB" id="8573660at2759"/>
<dbReference type="TreeFam" id="TF333393"/>
<dbReference type="Reactome" id="R-SSC-418990">
    <property type="pathway name" value="Adherens junctions interactions"/>
</dbReference>
<dbReference type="Proteomes" id="UP000008227">
    <property type="component" value="Chromosome 7"/>
</dbReference>
<dbReference type="Proteomes" id="UP000314985">
    <property type="component" value="Unplaced"/>
</dbReference>
<dbReference type="Proteomes" id="UP000694570">
    <property type="component" value="Unplaced"/>
</dbReference>
<dbReference type="Proteomes" id="UP000694571">
    <property type="component" value="Unplaced"/>
</dbReference>
<dbReference type="Proteomes" id="UP000694720">
    <property type="component" value="Unplaced"/>
</dbReference>
<dbReference type="Proteomes" id="UP000694722">
    <property type="component" value="Unplaced"/>
</dbReference>
<dbReference type="Proteomes" id="UP000694723">
    <property type="component" value="Unplaced"/>
</dbReference>
<dbReference type="Proteomes" id="UP000694724">
    <property type="component" value="Unplaced"/>
</dbReference>
<dbReference type="Proteomes" id="UP000694725">
    <property type="component" value="Unplaced"/>
</dbReference>
<dbReference type="Proteomes" id="UP000694726">
    <property type="component" value="Unplaced"/>
</dbReference>
<dbReference type="Proteomes" id="UP000694727">
    <property type="component" value="Unplaced"/>
</dbReference>
<dbReference type="Proteomes" id="UP000694728">
    <property type="component" value="Unplaced"/>
</dbReference>
<dbReference type="Bgee" id="ENSSSCG00000031538">
    <property type="expression patterns" value="Expressed in epididymis and 46 other cell types or tissues"/>
</dbReference>
<dbReference type="GO" id="GO:0005737">
    <property type="term" value="C:cytoplasm"/>
    <property type="evidence" value="ECO:0000250"/>
    <property type="project" value="UniProtKB"/>
</dbReference>
<dbReference type="GO" id="GO:0010494">
    <property type="term" value="C:cytoplasmic stress granule"/>
    <property type="evidence" value="ECO:0007669"/>
    <property type="project" value="UniProtKB-SubCell"/>
</dbReference>
<dbReference type="GO" id="GO:0030139">
    <property type="term" value="C:endocytic vesicle"/>
    <property type="evidence" value="ECO:0000250"/>
    <property type="project" value="UniProtKB"/>
</dbReference>
<dbReference type="GO" id="GO:0005615">
    <property type="term" value="C:extracellular space"/>
    <property type="evidence" value="ECO:0000250"/>
    <property type="project" value="UniProtKB"/>
</dbReference>
<dbReference type="GO" id="GO:0030426">
    <property type="term" value="C:growth cone"/>
    <property type="evidence" value="ECO:0000250"/>
    <property type="project" value="UniProtKB"/>
</dbReference>
<dbReference type="GO" id="GO:0043025">
    <property type="term" value="C:neuronal cell body"/>
    <property type="evidence" value="ECO:0000250"/>
    <property type="project" value="UniProtKB"/>
</dbReference>
<dbReference type="GO" id="GO:0005730">
    <property type="term" value="C:nucleolus"/>
    <property type="evidence" value="ECO:0007669"/>
    <property type="project" value="UniProtKB-SubCell"/>
</dbReference>
<dbReference type="GO" id="GO:0005634">
    <property type="term" value="C:nucleus"/>
    <property type="evidence" value="ECO:0000250"/>
    <property type="project" value="UniProtKB"/>
</dbReference>
<dbReference type="GO" id="GO:0003677">
    <property type="term" value="F:DNA binding"/>
    <property type="evidence" value="ECO:0007669"/>
    <property type="project" value="UniProtKB-KW"/>
</dbReference>
<dbReference type="GO" id="GO:0004519">
    <property type="term" value="F:endonuclease activity"/>
    <property type="evidence" value="ECO:0007669"/>
    <property type="project" value="UniProtKB-KW"/>
</dbReference>
<dbReference type="GO" id="GO:0042803">
    <property type="term" value="F:protein homodimerization activity"/>
    <property type="evidence" value="ECO:0000250"/>
    <property type="project" value="UniProtKB"/>
</dbReference>
<dbReference type="GO" id="GO:0004540">
    <property type="term" value="F:RNA nuclease activity"/>
    <property type="evidence" value="ECO:0000318"/>
    <property type="project" value="GO_Central"/>
</dbReference>
<dbReference type="GO" id="GO:0004549">
    <property type="term" value="F:tRNA-specific ribonuclease activity"/>
    <property type="evidence" value="ECO:0000250"/>
    <property type="project" value="UniProtKB"/>
</dbReference>
<dbReference type="GO" id="GO:0001525">
    <property type="term" value="P:angiogenesis"/>
    <property type="evidence" value="ECO:0000250"/>
    <property type="project" value="UniProtKB"/>
</dbReference>
<dbReference type="GO" id="GO:0019731">
    <property type="term" value="P:antibacterial humoral response"/>
    <property type="evidence" value="ECO:0000318"/>
    <property type="project" value="GO_Central"/>
</dbReference>
<dbReference type="GO" id="GO:0061844">
    <property type="term" value="P:antimicrobial humoral immune response mediated by antimicrobial peptide"/>
    <property type="evidence" value="ECO:0000318"/>
    <property type="project" value="GO_Central"/>
</dbReference>
<dbReference type="GO" id="GO:0050830">
    <property type="term" value="P:defense response to Gram-positive bacterium"/>
    <property type="evidence" value="ECO:0000318"/>
    <property type="project" value="GO_Central"/>
</dbReference>
<dbReference type="GO" id="GO:0071425">
    <property type="term" value="P:hematopoietic stem cell proliferation"/>
    <property type="evidence" value="ECO:0000250"/>
    <property type="project" value="UniProtKB"/>
</dbReference>
<dbReference type="GO" id="GO:0045087">
    <property type="term" value="P:innate immune response"/>
    <property type="evidence" value="ECO:0000318"/>
    <property type="project" value="GO_Central"/>
</dbReference>
<dbReference type="GO" id="GO:0043066">
    <property type="term" value="P:negative regulation of apoptotic process"/>
    <property type="evidence" value="ECO:0000250"/>
    <property type="project" value="UniProtKB"/>
</dbReference>
<dbReference type="GO" id="GO:0032055">
    <property type="term" value="P:negative regulation of translation in response to stress"/>
    <property type="evidence" value="ECO:0000250"/>
    <property type="project" value="UniProtKB"/>
</dbReference>
<dbReference type="GO" id="GO:0034063">
    <property type="term" value="P:stress granule assembly"/>
    <property type="evidence" value="ECO:0000250"/>
    <property type="project" value="UniProtKB"/>
</dbReference>
<dbReference type="CDD" id="cd06265">
    <property type="entry name" value="RNase_A_canonical"/>
    <property type="match status" value="1"/>
</dbReference>
<dbReference type="FunFam" id="3.10.130.10:FF:000001">
    <property type="entry name" value="Ribonuclease pancreatic"/>
    <property type="match status" value="1"/>
</dbReference>
<dbReference type="Gene3D" id="3.10.130.10">
    <property type="entry name" value="Ribonuclease A-like domain"/>
    <property type="match status" value="1"/>
</dbReference>
<dbReference type="InterPro" id="IPR001427">
    <property type="entry name" value="RNaseA"/>
</dbReference>
<dbReference type="InterPro" id="IPR036816">
    <property type="entry name" value="RNaseA-like_dom_sf"/>
</dbReference>
<dbReference type="InterPro" id="IPR023411">
    <property type="entry name" value="RNaseA_AS"/>
</dbReference>
<dbReference type="InterPro" id="IPR023412">
    <property type="entry name" value="RNaseA_domain"/>
</dbReference>
<dbReference type="PANTHER" id="PTHR11437:SF60">
    <property type="entry name" value="ANGIOGENIN"/>
    <property type="match status" value="1"/>
</dbReference>
<dbReference type="PANTHER" id="PTHR11437">
    <property type="entry name" value="RIBONUCLEASE"/>
    <property type="match status" value="1"/>
</dbReference>
<dbReference type="Pfam" id="PF00074">
    <property type="entry name" value="RnaseA"/>
    <property type="match status" value="1"/>
</dbReference>
<dbReference type="PRINTS" id="PR00794">
    <property type="entry name" value="RIBONUCLEASE"/>
</dbReference>
<dbReference type="SMART" id="SM00092">
    <property type="entry name" value="RNAse_Pc"/>
    <property type="match status" value="1"/>
</dbReference>
<dbReference type="SUPFAM" id="SSF54076">
    <property type="entry name" value="RNase A-like"/>
    <property type="match status" value="1"/>
</dbReference>
<dbReference type="PROSITE" id="PS00127">
    <property type="entry name" value="RNASE_PANCREATIC"/>
    <property type="match status" value="1"/>
</dbReference>
<sequence length="147" mass="16505">MVILLGPLLLVFMLGLGLAPLSLAKDEDRYTHFLTQHYDAKPKGRDGRYCESIMKQRGLTRPCKEVNTFIHGTRNDIKAICNDKNGEPYNNFRRSKSPFQITTCKHKGGSNRPPCGYRATAGFRTIAVACENGLPVHFDESFIITSQ</sequence>
<protein>
    <recommendedName>
        <fullName>Angiogenin</fullName>
        <ecNumber evidence="1">3.1.27.-</ecNumber>
    </recommendedName>
    <alternativeName>
        <fullName>Ribonuclease 5</fullName>
        <shortName>RNase 5</shortName>
    </alternativeName>
</protein>